<gene>
    <name evidence="1" type="primary">rpsD</name>
    <name type="ordered locus">Desal_1210</name>
</gene>
<protein>
    <recommendedName>
        <fullName evidence="1">Small ribosomal subunit protein uS4</fullName>
    </recommendedName>
    <alternativeName>
        <fullName evidence="2">30S ribosomal protein S4</fullName>
    </alternativeName>
</protein>
<proteinExistence type="inferred from homology"/>
<organism>
    <name type="scientific">Maridesulfovibrio salexigens (strain ATCC 14822 / DSM 2638 / NCIMB 8403 / VKM B-1763)</name>
    <name type="common">Desulfovibrio salexigens</name>
    <dbReference type="NCBI Taxonomy" id="526222"/>
    <lineage>
        <taxon>Bacteria</taxon>
        <taxon>Pseudomonadati</taxon>
        <taxon>Thermodesulfobacteriota</taxon>
        <taxon>Desulfovibrionia</taxon>
        <taxon>Desulfovibrionales</taxon>
        <taxon>Desulfovibrionaceae</taxon>
        <taxon>Maridesulfovibrio</taxon>
    </lineage>
</organism>
<dbReference type="EMBL" id="CP001649">
    <property type="protein sequence ID" value="ACS79273.1"/>
    <property type="molecule type" value="Genomic_DNA"/>
</dbReference>
<dbReference type="RefSeq" id="WP_015851091.1">
    <property type="nucleotide sequence ID" value="NC_012881.1"/>
</dbReference>
<dbReference type="SMR" id="C6C1B0"/>
<dbReference type="STRING" id="526222.Desal_1210"/>
<dbReference type="KEGG" id="dsa:Desal_1210"/>
<dbReference type="eggNOG" id="COG0522">
    <property type="taxonomic scope" value="Bacteria"/>
</dbReference>
<dbReference type="HOGENOM" id="CLU_092403_0_2_7"/>
<dbReference type="OrthoDB" id="9803672at2"/>
<dbReference type="Proteomes" id="UP000002601">
    <property type="component" value="Chromosome"/>
</dbReference>
<dbReference type="GO" id="GO:0015935">
    <property type="term" value="C:small ribosomal subunit"/>
    <property type="evidence" value="ECO:0007669"/>
    <property type="project" value="InterPro"/>
</dbReference>
<dbReference type="GO" id="GO:0019843">
    <property type="term" value="F:rRNA binding"/>
    <property type="evidence" value="ECO:0007669"/>
    <property type="project" value="UniProtKB-UniRule"/>
</dbReference>
<dbReference type="GO" id="GO:0003735">
    <property type="term" value="F:structural constituent of ribosome"/>
    <property type="evidence" value="ECO:0007669"/>
    <property type="project" value="InterPro"/>
</dbReference>
<dbReference type="GO" id="GO:0042274">
    <property type="term" value="P:ribosomal small subunit biogenesis"/>
    <property type="evidence" value="ECO:0007669"/>
    <property type="project" value="TreeGrafter"/>
</dbReference>
<dbReference type="GO" id="GO:0006412">
    <property type="term" value="P:translation"/>
    <property type="evidence" value="ECO:0007669"/>
    <property type="project" value="UniProtKB-UniRule"/>
</dbReference>
<dbReference type="CDD" id="cd00165">
    <property type="entry name" value="S4"/>
    <property type="match status" value="1"/>
</dbReference>
<dbReference type="FunFam" id="1.10.1050.10:FF:000001">
    <property type="entry name" value="30S ribosomal protein S4"/>
    <property type="match status" value="1"/>
</dbReference>
<dbReference type="FunFam" id="3.10.290.10:FF:000001">
    <property type="entry name" value="30S ribosomal protein S4"/>
    <property type="match status" value="1"/>
</dbReference>
<dbReference type="Gene3D" id="1.10.1050.10">
    <property type="entry name" value="Ribosomal Protein S4 Delta 41, Chain A, domain 1"/>
    <property type="match status" value="1"/>
</dbReference>
<dbReference type="Gene3D" id="3.10.290.10">
    <property type="entry name" value="RNA-binding S4 domain"/>
    <property type="match status" value="1"/>
</dbReference>
<dbReference type="HAMAP" id="MF_01306_B">
    <property type="entry name" value="Ribosomal_uS4_B"/>
    <property type="match status" value="1"/>
</dbReference>
<dbReference type="InterPro" id="IPR022801">
    <property type="entry name" value="Ribosomal_uS4"/>
</dbReference>
<dbReference type="InterPro" id="IPR005709">
    <property type="entry name" value="Ribosomal_uS4_bac-type"/>
</dbReference>
<dbReference type="InterPro" id="IPR018079">
    <property type="entry name" value="Ribosomal_uS4_CS"/>
</dbReference>
<dbReference type="InterPro" id="IPR001912">
    <property type="entry name" value="Ribosomal_uS4_N"/>
</dbReference>
<dbReference type="InterPro" id="IPR002942">
    <property type="entry name" value="S4_RNA-bd"/>
</dbReference>
<dbReference type="InterPro" id="IPR036986">
    <property type="entry name" value="S4_RNA-bd_sf"/>
</dbReference>
<dbReference type="NCBIfam" id="NF003717">
    <property type="entry name" value="PRK05327.1"/>
    <property type="match status" value="1"/>
</dbReference>
<dbReference type="NCBIfam" id="TIGR01017">
    <property type="entry name" value="rpsD_bact"/>
    <property type="match status" value="1"/>
</dbReference>
<dbReference type="PANTHER" id="PTHR11831">
    <property type="entry name" value="30S 40S RIBOSOMAL PROTEIN"/>
    <property type="match status" value="1"/>
</dbReference>
<dbReference type="PANTHER" id="PTHR11831:SF4">
    <property type="entry name" value="SMALL RIBOSOMAL SUBUNIT PROTEIN US4M"/>
    <property type="match status" value="1"/>
</dbReference>
<dbReference type="Pfam" id="PF00163">
    <property type="entry name" value="Ribosomal_S4"/>
    <property type="match status" value="1"/>
</dbReference>
<dbReference type="Pfam" id="PF01479">
    <property type="entry name" value="S4"/>
    <property type="match status" value="1"/>
</dbReference>
<dbReference type="SMART" id="SM01390">
    <property type="entry name" value="Ribosomal_S4"/>
    <property type="match status" value="1"/>
</dbReference>
<dbReference type="SMART" id="SM00363">
    <property type="entry name" value="S4"/>
    <property type="match status" value="1"/>
</dbReference>
<dbReference type="SUPFAM" id="SSF55174">
    <property type="entry name" value="Alpha-L RNA-binding motif"/>
    <property type="match status" value="1"/>
</dbReference>
<dbReference type="PROSITE" id="PS00632">
    <property type="entry name" value="RIBOSOMAL_S4"/>
    <property type="match status" value="1"/>
</dbReference>
<dbReference type="PROSITE" id="PS50889">
    <property type="entry name" value="S4"/>
    <property type="match status" value="1"/>
</dbReference>
<comment type="function">
    <text evidence="1">One of the primary rRNA binding proteins, it binds directly to 16S rRNA where it nucleates assembly of the body of the 30S subunit.</text>
</comment>
<comment type="function">
    <text evidence="1">With S5 and S12 plays an important role in translational accuracy.</text>
</comment>
<comment type="subunit">
    <text evidence="1">Part of the 30S ribosomal subunit. Contacts protein S5. The interaction surface between S4 and S5 is involved in control of translational fidelity.</text>
</comment>
<comment type="similarity">
    <text evidence="1">Belongs to the universal ribosomal protein uS4 family.</text>
</comment>
<accession>C6C1B0</accession>
<keyword id="KW-1185">Reference proteome</keyword>
<keyword id="KW-0687">Ribonucleoprotein</keyword>
<keyword id="KW-0689">Ribosomal protein</keyword>
<keyword id="KW-0694">RNA-binding</keyword>
<keyword id="KW-0699">rRNA-binding</keyword>
<feature type="chain" id="PRO_1000214283" description="Small ribosomal subunit protein uS4">
    <location>
        <begin position="1"/>
        <end position="208"/>
    </location>
</feature>
<feature type="domain" description="S4 RNA-binding" evidence="1">
    <location>
        <begin position="98"/>
        <end position="161"/>
    </location>
</feature>
<name>RS4_MARSD</name>
<evidence type="ECO:0000255" key="1">
    <source>
        <dbReference type="HAMAP-Rule" id="MF_01306"/>
    </source>
</evidence>
<evidence type="ECO:0000305" key="2"/>
<sequence length="208" mass="24039">MARYTKAKCRLCRREGEKLFIKGDRCFTDKCSYERRPYAPGIAGRMRKKMSDYAIQLREKQKVRRMYGVLEGQFRSYFKRADGMKGVTGANLLMLLETRLDNTVYRLGFANSRAQARQLVKHGIFTKNGRRVNVPSMHVKPGDVIEVREESRKIPVIAEAQEVIARRGCPEWLEADGANFKGEVKAMPTREDIQFPINEQLIVELYSK</sequence>
<reference key="1">
    <citation type="submission" date="2009-06" db="EMBL/GenBank/DDBJ databases">
        <title>Complete sequence of Desulfovibrio salexigens DSM 2638.</title>
        <authorList>
            <consortium name="US DOE Joint Genome Institute"/>
            <person name="Lucas S."/>
            <person name="Copeland A."/>
            <person name="Lapidus A."/>
            <person name="Glavina del Rio T."/>
            <person name="Tice H."/>
            <person name="Bruce D."/>
            <person name="Goodwin L."/>
            <person name="Pitluck S."/>
            <person name="Munk A.C."/>
            <person name="Brettin T."/>
            <person name="Detter J.C."/>
            <person name="Han C."/>
            <person name="Tapia R."/>
            <person name="Larimer F."/>
            <person name="Land M."/>
            <person name="Hauser L."/>
            <person name="Kyrpides N."/>
            <person name="Anderson I."/>
            <person name="Wall J.D."/>
            <person name="Arkin A.P."/>
            <person name="Dehal P."/>
            <person name="Chivian D."/>
            <person name="Giles B."/>
            <person name="Hazen T.C."/>
        </authorList>
    </citation>
    <scope>NUCLEOTIDE SEQUENCE [LARGE SCALE GENOMIC DNA]</scope>
    <source>
        <strain>ATCC 14822 / DSM 2638 / NCIMB 8403 / VKM B-1763</strain>
    </source>
</reference>